<accession>B9J1C6</accession>
<evidence type="ECO:0000255" key="1">
    <source>
        <dbReference type="HAMAP-Rule" id="MF_01224"/>
    </source>
</evidence>
<feature type="chain" id="PRO_1000164879" description="Cyclic pyranopterin monophosphate synthase">
    <location>
        <begin position="1"/>
        <end position="161"/>
    </location>
</feature>
<feature type="active site" evidence="1">
    <location>
        <position position="130"/>
    </location>
</feature>
<feature type="binding site" evidence="1">
    <location>
        <begin position="75"/>
        <end position="77"/>
    </location>
    <ligand>
        <name>substrate</name>
    </ligand>
</feature>
<feature type="binding site" evidence="1">
    <location>
        <begin position="115"/>
        <end position="116"/>
    </location>
    <ligand>
        <name>substrate</name>
    </ligand>
</feature>
<gene>
    <name evidence="1" type="primary">moaC</name>
    <name type="ordered locus">BCQ_4538</name>
</gene>
<name>MOAC_BACCQ</name>
<protein>
    <recommendedName>
        <fullName evidence="1">Cyclic pyranopterin monophosphate synthase</fullName>
        <ecNumber evidence="1">4.6.1.17</ecNumber>
    </recommendedName>
    <alternativeName>
        <fullName evidence="1">Molybdenum cofactor biosynthesis protein C</fullName>
    </alternativeName>
</protein>
<keyword id="KW-0456">Lyase</keyword>
<keyword id="KW-0501">Molybdenum cofactor biosynthesis</keyword>
<organism>
    <name type="scientific">Bacillus cereus (strain Q1)</name>
    <dbReference type="NCBI Taxonomy" id="361100"/>
    <lineage>
        <taxon>Bacteria</taxon>
        <taxon>Bacillati</taxon>
        <taxon>Bacillota</taxon>
        <taxon>Bacilli</taxon>
        <taxon>Bacillales</taxon>
        <taxon>Bacillaceae</taxon>
        <taxon>Bacillus</taxon>
        <taxon>Bacillus cereus group</taxon>
    </lineage>
</organism>
<comment type="function">
    <text evidence="1">Catalyzes the conversion of (8S)-3',8-cyclo-7,8-dihydroguanosine 5'-triphosphate to cyclic pyranopterin monophosphate (cPMP).</text>
</comment>
<comment type="catalytic activity">
    <reaction evidence="1">
        <text>(8S)-3',8-cyclo-7,8-dihydroguanosine 5'-triphosphate = cyclic pyranopterin phosphate + diphosphate</text>
        <dbReference type="Rhea" id="RHEA:49580"/>
        <dbReference type="ChEBI" id="CHEBI:33019"/>
        <dbReference type="ChEBI" id="CHEBI:59648"/>
        <dbReference type="ChEBI" id="CHEBI:131766"/>
        <dbReference type="EC" id="4.6.1.17"/>
    </reaction>
</comment>
<comment type="pathway">
    <text evidence="1">Cofactor biosynthesis; molybdopterin biosynthesis.</text>
</comment>
<comment type="subunit">
    <text evidence="1">Homohexamer; trimer of dimers.</text>
</comment>
<comment type="similarity">
    <text evidence="1">Belongs to the MoaC family.</text>
</comment>
<dbReference type="EC" id="4.6.1.17" evidence="1"/>
<dbReference type="EMBL" id="CP000227">
    <property type="protein sequence ID" value="ACM14964.1"/>
    <property type="molecule type" value="Genomic_DNA"/>
</dbReference>
<dbReference type="SMR" id="B9J1C6"/>
<dbReference type="KEGG" id="bcq:BCQ_4538"/>
<dbReference type="HOGENOM" id="CLU_074693_1_1_9"/>
<dbReference type="UniPathway" id="UPA00344"/>
<dbReference type="Proteomes" id="UP000000441">
    <property type="component" value="Chromosome"/>
</dbReference>
<dbReference type="GO" id="GO:0061799">
    <property type="term" value="F:cyclic pyranopterin monophosphate synthase activity"/>
    <property type="evidence" value="ECO:0007669"/>
    <property type="project" value="UniProtKB-UniRule"/>
</dbReference>
<dbReference type="GO" id="GO:0006777">
    <property type="term" value="P:Mo-molybdopterin cofactor biosynthetic process"/>
    <property type="evidence" value="ECO:0007669"/>
    <property type="project" value="UniProtKB-UniRule"/>
</dbReference>
<dbReference type="CDD" id="cd01420">
    <property type="entry name" value="MoaC_PE"/>
    <property type="match status" value="1"/>
</dbReference>
<dbReference type="Gene3D" id="3.30.70.640">
    <property type="entry name" value="Molybdopterin cofactor biosynthesis C (MoaC) domain"/>
    <property type="match status" value="1"/>
</dbReference>
<dbReference type="HAMAP" id="MF_01224_B">
    <property type="entry name" value="MoaC_B"/>
    <property type="match status" value="1"/>
</dbReference>
<dbReference type="InterPro" id="IPR023045">
    <property type="entry name" value="MoaC"/>
</dbReference>
<dbReference type="InterPro" id="IPR047594">
    <property type="entry name" value="MoaC_bact/euk"/>
</dbReference>
<dbReference type="InterPro" id="IPR036522">
    <property type="entry name" value="MoaC_sf"/>
</dbReference>
<dbReference type="InterPro" id="IPR050105">
    <property type="entry name" value="MoCo_biosynth_MoaA/MoaC"/>
</dbReference>
<dbReference type="InterPro" id="IPR002820">
    <property type="entry name" value="Mopterin_CF_biosynth-C_dom"/>
</dbReference>
<dbReference type="NCBIfam" id="TIGR00581">
    <property type="entry name" value="moaC"/>
    <property type="match status" value="1"/>
</dbReference>
<dbReference type="NCBIfam" id="NF006870">
    <property type="entry name" value="PRK09364.1"/>
    <property type="match status" value="1"/>
</dbReference>
<dbReference type="PANTHER" id="PTHR22960:SF29">
    <property type="entry name" value="CYCLIC PYRANOPTERIN MONOPHOSPHATE SYNTHASE"/>
    <property type="match status" value="1"/>
</dbReference>
<dbReference type="PANTHER" id="PTHR22960">
    <property type="entry name" value="MOLYBDOPTERIN COFACTOR SYNTHESIS PROTEIN A"/>
    <property type="match status" value="1"/>
</dbReference>
<dbReference type="Pfam" id="PF01967">
    <property type="entry name" value="MoaC"/>
    <property type="match status" value="1"/>
</dbReference>
<dbReference type="SUPFAM" id="SSF55040">
    <property type="entry name" value="Molybdenum cofactor biosynthesis protein C, MoaC"/>
    <property type="match status" value="1"/>
</dbReference>
<proteinExistence type="inferred from homology"/>
<sequence length="161" mass="17469">MSSFTHFNDQGRAKMVDISDKKATVRTAIACSSIVVTKEIYDKISHNEIGKGDVLAVAQIAGIMAAKRTSDIIPMCHPLLLKGVDVSFDWKQSDEQYRLLIEVKVKTEGSTGVEMEALTAASATALTVYDMCKAVDKGMIIGETYLLEKTGGKSGDYARKS</sequence>
<reference key="1">
    <citation type="journal article" date="2009" name="J. Bacteriol.">
        <title>Complete genome sequence of the extremophilic Bacillus cereus strain Q1 with industrial applications.</title>
        <authorList>
            <person name="Xiong Z."/>
            <person name="Jiang Y."/>
            <person name="Qi D."/>
            <person name="Lu H."/>
            <person name="Yang F."/>
            <person name="Yang J."/>
            <person name="Chen L."/>
            <person name="Sun L."/>
            <person name="Xu X."/>
            <person name="Xue Y."/>
            <person name="Zhu Y."/>
            <person name="Jin Q."/>
        </authorList>
    </citation>
    <scope>NUCLEOTIDE SEQUENCE [LARGE SCALE GENOMIC DNA]</scope>
    <source>
        <strain>Q1</strain>
    </source>
</reference>